<dbReference type="EC" id="1.2.1.70" evidence="1"/>
<dbReference type="EMBL" id="CP000038">
    <property type="protein sequence ID" value="AAZ88634.1"/>
    <property type="molecule type" value="Genomic_DNA"/>
</dbReference>
<dbReference type="RefSeq" id="WP_000173200.1">
    <property type="nucleotide sequence ID" value="NC_007384.1"/>
</dbReference>
<dbReference type="SMR" id="Q3Z0S8"/>
<dbReference type="GeneID" id="93775275"/>
<dbReference type="KEGG" id="ssn:SSON_1968"/>
<dbReference type="HOGENOM" id="CLU_035113_2_2_6"/>
<dbReference type="UniPathway" id="UPA00251">
    <property type="reaction ID" value="UER00316"/>
</dbReference>
<dbReference type="Proteomes" id="UP000002529">
    <property type="component" value="Chromosome"/>
</dbReference>
<dbReference type="GO" id="GO:0008883">
    <property type="term" value="F:glutamyl-tRNA reductase activity"/>
    <property type="evidence" value="ECO:0007669"/>
    <property type="project" value="UniProtKB-UniRule"/>
</dbReference>
<dbReference type="GO" id="GO:0050661">
    <property type="term" value="F:NADP binding"/>
    <property type="evidence" value="ECO:0007669"/>
    <property type="project" value="InterPro"/>
</dbReference>
<dbReference type="GO" id="GO:0019353">
    <property type="term" value="P:protoporphyrinogen IX biosynthetic process from glutamate"/>
    <property type="evidence" value="ECO:0007669"/>
    <property type="project" value="TreeGrafter"/>
</dbReference>
<dbReference type="CDD" id="cd05213">
    <property type="entry name" value="NAD_bind_Glutamyl_tRNA_reduct"/>
    <property type="match status" value="1"/>
</dbReference>
<dbReference type="FunFam" id="3.30.460.30:FF:000001">
    <property type="entry name" value="Glutamyl-tRNA reductase"/>
    <property type="match status" value="1"/>
</dbReference>
<dbReference type="FunFam" id="3.40.50.720:FF:000031">
    <property type="entry name" value="Glutamyl-tRNA reductase"/>
    <property type="match status" value="1"/>
</dbReference>
<dbReference type="Gene3D" id="3.30.460.30">
    <property type="entry name" value="Glutamyl-tRNA reductase, N-terminal domain"/>
    <property type="match status" value="1"/>
</dbReference>
<dbReference type="Gene3D" id="3.40.50.720">
    <property type="entry name" value="NAD(P)-binding Rossmann-like Domain"/>
    <property type="match status" value="1"/>
</dbReference>
<dbReference type="HAMAP" id="MF_00087">
    <property type="entry name" value="Glu_tRNA_reductase"/>
    <property type="match status" value="1"/>
</dbReference>
<dbReference type="InterPro" id="IPR000343">
    <property type="entry name" value="4pyrrol_synth_GluRdtase"/>
</dbReference>
<dbReference type="InterPro" id="IPR015896">
    <property type="entry name" value="4pyrrol_synth_GluRdtase_dimer"/>
</dbReference>
<dbReference type="InterPro" id="IPR015895">
    <property type="entry name" value="4pyrrol_synth_GluRdtase_N"/>
</dbReference>
<dbReference type="InterPro" id="IPR018214">
    <property type="entry name" value="GluRdtase_CS"/>
</dbReference>
<dbReference type="InterPro" id="IPR036453">
    <property type="entry name" value="GluRdtase_dimer_dom_sf"/>
</dbReference>
<dbReference type="InterPro" id="IPR036343">
    <property type="entry name" value="GluRdtase_N_sf"/>
</dbReference>
<dbReference type="InterPro" id="IPR036291">
    <property type="entry name" value="NAD(P)-bd_dom_sf"/>
</dbReference>
<dbReference type="InterPro" id="IPR006151">
    <property type="entry name" value="Shikm_DH/Glu-tRNA_Rdtase"/>
</dbReference>
<dbReference type="NCBIfam" id="TIGR01035">
    <property type="entry name" value="hemA"/>
    <property type="match status" value="1"/>
</dbReference>
<dbReference type="PANTHER" id="PTHR43013">
    <property type="entry name" value="GLUTAMYL-TRNA REDUCTASE"/>
    <property type="match status" value="1"/>
</dbReference>
<dbReference type="PANTHER" id="PTHR43013:SF1">
    <property type="entry name" value="GLUTAMYL-TRNA REDUCTASE"/>
    <property type="match status" value="1"/>
</dbReference>
<dbReference type="Pfam" id="PF00745">
    <property type="entry name" value="GlutR_dimer"/>
    <property type="match status" value="1"/>
</dbReference>
<dbReference type="Pfam" id="PF05201">
    <property type="entry name" value="GlutR_N"/>
    <property type="match status" value="1"/>
</dbReference>
<dbReference type="Pfam" id="PF01488">
    <property type="entry name" value="Shikimate_DH"/>
    <property type="match status" value="1"/>
</dbReference>
<dbReference type="PIRSF" id="PIRSF000445">
    <property type="entry name" value="4pyrrol_synth_GluRdtase"/>
    <property type="match status" value="1"/>
</dbReference>
<dbReference type="SUPFAM" id="SSF69742">
    <property type="entry name" value="Glutamyl tRNA-reductase catalytic, N-terminal domain"/>
    <property type="match status" value="1"/>
</dbReference>
<dbReference type="SUPFAM" id="SSF69075">
    <property type="entry name" value="Glutamyl tRNA-reductase dimerization domain"/>
    <property type="match status" value="1"/>
</dbReference>
<dbReference type="SUPFAM" id="SSF51735">
    <property type="entry name" value="NAD(P)-binding Rossmann-fold domains"/>
    <property type="match status" value="1"/>
</dbReference>
<dbReference type="PROSITE" id="PS00747">
    <property type="entry name" value="GLUTR"/>
    <property type="match status" value="1"/>
</dbReference>
<sequence>MTLLALGINHKTAPVSLRERVSFSPDKLDQALDSLLAQPMVQGGVVLSTCNRTELYLSVEEQDNLQEALIRWLCDYHNLNEEDLRKSLYWHQDNDAVSHLMRVASGLDSLVLGEPQILGQVKKAFADSQKGHMKASELERMFQKSFSVAKRVRTETDIGASAVSVAFAACTLARQIFESLSTVTVLLVGAGETIELVARHLREHKVQKMIIANRTRERAQILADEVGAEVIALSEIDERLREADIIISSTASPLPIIGKGMVERALKSRRNQPMLLVDIAVPRDVEPEVGKLANAYLYSVDDLQSIISHNLAQRKAAAVEAETIVAQETSEFMAWLRAQSASETIREYRSQAEHVRDELTAKALAALEQGGDAQAIMQDLAWKLTNRLIHAPTKSLQQAARDGDNERLNILRDSLGLE</sequence>
<reference key="1">
    <citation type="journal article" date="2005" name="Nucleic Acids Res.">
        <title>Genome dynamics and diversity of Shigella species, the etiologic agents of bacillary dysentery.</title>
        <authorList>
            <person name="Yang F."/>
            <person name="Yang J."/>
            <person name="Zhang X."/>
            <person name="Chen L."/>
            <person name="Jiang Y."/>
            <person name="Yan Y."/>
            <person name="Tang X."/>
            <person name="Wang J."/>
            <person name="Xiong Z."/>
            <person name="Dong J."/>
            <person name="Xue Y."/>
            <person name="Zhu Y."/>
            <person name="Xu X."/>
            <person name="Sun L."/>
            <person name="Chen S."/>
            <person name="Nie H."/>
            <person name="Peng J."/>
            <person name="Xu J."/>
            <person name="Wang Y."/>
            <person name="Yuan Z."/>
            <person name="Wen Y."/>
            <person name="Yao Z."/>
            <person name="Shen Y."/>
            <person name="Qiang B."/>
            <person name="Hou Y."/>
            <person name="Yu J."/>
            <person name="Jin Q."/>
        </authorList>
    </citation>
    <scope>NUCLEOTIDE SEQUENCE [LARGE SCALE GENOMIC DNA]</scope>
    <source>
        <strain>Ss046</strain>
    </source>
</reference>
<evidence type="ECO:0000255" key="1">
    <source>
        <dbReference type="HAMAP-Rule" id="MF_00087"/>
    </source>
</evidence>
<comment type="function">
    <text evidence="1">Catalyzes the NADPH-dependent reduction of glutamyl-tRNA(Glu) to glutamate 1-semialdehyde (GSA).</text>
</comment>
<comment type="catalytic activity">
    <reaction evidence="1">
        <text>(S)-4-amino-5-oxopentanoate + tRNA(Glu) + NADP(+) = L-glutamyl-tRNA(Glu) + NADPH + H(+)</text>
        <dbReference type="Rhea" id="RHEA:12344"/>
        <dbReference type="Rhea" id="RHEA-COMP:9663"/>
        <dbReference type="Rhea" id="RHEA-COMP:9680"/>
        <dbReference type="ChEBI" id="CHEBI:15378"/>
        <dbReference type="ChEBI" id="CHEBI:57501"/>
        <dbReference type="ChEBI" id="CHEBI:57783"/>
        <dbReference type="ChEBI" id="CHEBI:58349"/>
        <dbReference type="ChEBI" id="CHEBI:78442"/>
        <dbReference type="ChEBI" id="CHEBI:78520"/>
        <dbReference type="EC" id="1.2.1.70"/>
    </reaction>
</comment>
<comment type="pathway">
    <text evidence="1">Porphyrin-containing compound metabolism; protoporphyrin-IX biosynthesis; 5-aminolevulinate from L-glutamyl-tRNA(Glu): step 1/2.</text>
</comment>
<comment type="subunit">
    <text evidence="1">Homodimer.</text>
</comment>
<comment type="domain">
    <text evidence="1">Possesses an unusual extended V-shaped dimeric structure with each monomer consisting of three distinct domains arranged along a curved 'spinal' alpha-helix. The N-terminal catalytic domain specifically recognizes the glutamate moiety of the substrate. The second domain is the NADPH-binding domain, and the third C-terminal domain is responsible for dimerization.</text>
</comment>
<comment type="miscellaneous">
    <text evidence="1">During catalysis, the active site Cys acts as a nucleophile attacking the alpha-carbonyl group of tRNA-bound glutamate with the formation of a thioester intermediate between enzyme and glutamate, and the concomitant release of tRNA(Glu). The thioester intermediate is finally reduced by direct hydride transfer from NADPH, to form the product GSA.</text>
</comment>
<comment type="similarity">
    <text evidence="1">Belongs to the glutamyl-tRNA reductase family.</text>
</comment>
<organism>
    <name type="scientific">Shigella sonnei (strain Ss046)</name>
    <dbReference type="NCBI Taxonomy" id="300269"/>
    <lineage>
        <taxon>Bacteria</taxon>
        <taxon>Pseudomonadati</taxon>
        <taxon>Pseudomonadota</taxon>
        <taxon>Gammaproteobacteria</taxon>
        <taxon>Enterobacterales</taxon>
        <taxon>Enterobacteriaceae</taxon>
        <taxon>Shigella</taxon>
    </lineage>
</organism>
<keyword id="KW-0521">NADP</keyword>
<keyword id="KW-0560">Oxidoreductase</keyword>
<keyword id="KW-0627">Porphyrin biosynthesis</keyword>
<keyword id="KW-1185">Reference proteome</keyword>
<protein>
    <recommendedName>
        <fullName evidence="1">Glutamyl-tRNA reductase</fullName>
        <shortName evidence="1">GluTR</shortName>
        <ecNumber evidence="1">1.2.1.70</ecNumber>
    </recommendedName>
</protein>
<gene>
    <name evidence="1" type="primary">hemA</name>
    <name type="ordered locus">SSON_1968</name>
</gene>
<feature type="chain" id="PRO_1000004698" description="Glutamyl-tRNA reductase">
    <location>
        <begin position="1"/>
        <end position="418"/>
    </location>
</feature>
<feature type="active site" description="Nucleophile" evidence="1">
    <location>
        <position position="50"/>
    </location>
</feature>
<feature type="binding site" evidence="1">
    <location>
        <begin position="49"/>
        <end position="52"/>
    </location>
    <ligand>
        <name>substrate</name>
    </ligand>
</feature>
<feature type="binding site" evidence="1">
    <location>
        <position position="109"/>
    </location>
    <ligand>
        <name>substrate</name>
    </ligand>
</feature>
<feature type="binding site" evidence="1">
    <location>
        <begin position="114"/>
        <end position="116"/>
    </location>
    <ligand>
        <name>substrate</name>
    </ligand>
</feature>
<feature type="binding site" evidence="1">
    <location>
        <position position="120"/>
    </location>
    <ligand>
        <name>substrate</name>
    </ligand>
</feature>
<feature type="binding site" evidence="1">
    <location>
        <begin position="189"/>
        <end position="194"/>
    </location>
    <ligand>
        <name>NADP(+)</name>
        <dbReference type="ChEBI" id="CHEBI:58349"/>
    </ligand>
</feature>
<feature type="site" description="Important for activity" evidence="1">
    <location>
        <position position="99"/>
    </location>
</feature>
<name>HEM1_SHISS</name>
<accession>Q3Z0S8</accession>
<proteinExistence type="inferred from homology"/>